<protein>
    <recommendedName>
        <fullName evidence="1">Protein FdhE homolog</fullName>
    </recommendedName>
</protein>
<proteinExistence type="inferred from homology"/>
<organism>
    <name type="scientific">Erwinia tasmaniensis (strain DSM 17950 / CFBP 7177 / CIP 109463 / NCPPB 4357 / Et1/99)</name>
    <dbReference type="NCBI Taxonomy" id="465817"/>
    <lineage>
        <taxon>Bacteria</taxon>
        <taxon>Pseudomonadati</taxon>
        <taxon>Pseudomonadota</taxon>
        <taxon>Gammaproteobacteria</taxon>
        <taxon>Enterobacterales</taxon>
        <taxon>Erwiniaceae</taxon>
        <taxon>Erwinia</taxon>
    </lineage>
</organism>
<feature type="chain" id="PRO_1000130361" description="Protein FdhE homolog">
    <location>
        <begin position="1"/>
        <end position="301"/>
    </location>
</feature>
<keyword id="KW-0963">Cytoplasm</keyword>
<keyword id="KW-1185">Reference proteome</keyword>
<comment type="function">
    <text evidence="1">Necessary for formate dehydrogenase activity.</text>
</comment>
<comment type="subcellular location">
    <subcellularLocation>
        <location evidence="1">Cytoplasm</location>
    </subcellularLocation>
</comment>
<comment type="similarity">
    <text evidence="1">Belongs to the FdhE family.</text>
</comment>
<reference key="1">
    <citation type="journal article" date="2008" name="Environ. Microbiol.">
        <title>The genome of Erwinia tasmaniensis strain Et1/99, a non-pathogenic bacterium in the genus Erwinia.</title>
        <authorList>
            <person name="Kube M."/>
            <person name="Migdoll A.M."/>
            <person name="Mueller I."/>
            <person name="Kuhl H."/>
            <person name="Beck A."/>
            <person name="Reinhardt R."/>
            <person name="Geider K."/>
        </authorList>
    </citation>
    <scope>NUCLEOTIDE SEQUENCE [LARGE SCALE GENOMIC DNA]</scope>
    <source>
        <strain>DSM 17950 / CFBP 7177 / CIP 109463 / NCPPB 4357 / Et1/99</strain>
    </source>
</reference>
<evidence type="ECO:0000255" key="1">
    <source>
        <dbReference type="HAMAP-Rule" id="MF_00611"/>
    </source>
</evidence>
<name>FDHE_ERWT9</name>
<accession>B2VCF8</accession>
<sequence length="301" mass="33371">MTILIIPQDPSENGNPAVDTIPPLLFPRLKNSYSRRAARLRQLAAKNPLGDYLRFAAVIASAQEIVLYDHPLRMDPRARLEESARSGRPPLDINTLPRDAHWQRLLHSLIAELKPDMSGQALSVLENLEKSSSVELEAMAGALFSNEFSQVSSDKAPFIWAALSIYWAQMAALIPGKAYVKAGEQRQFCPVCGSVPVSSMIHVDGVRYLHCNLCESEWHVADAKCSNCEQTRDLHHWSLDSAAVKAESCGDCGTWLKRLYQEKDPAVEAVADDLATLILDARMEQEGFARSSLNPFLFPGE</sequence>
<dbReference type="EMBL" id="CU468135">
    <property type="protein sequence ID" value="CAO98479.1"/>
    <property type="molecule type" value="Genomic_DNA"/>
</dbReference>
<dbReference type="RefSeq" id="WP_012443102.1">
    <property type="nucleotide sequence ID" value="NC_010694.1"/>
</dbReference>
<dbReference type="SMR" id="B2VCF8"/>
<dbReference type="STRING" id="465817.ETA_34330"/>
<dbReference type="KEGG" id="eta:ETA_34330"/>
<dbReference type="eggNOG" id="COG3058">
    <property type="taxonomic scope" value="Bacteria"/>
</dbReference>
<dbReference type="HOGENOM" id="CLU_055275_0_0_6"/>
<dbReference type="OrthoDB" id="9794151at2"/>
<dbReference type="Proteomes" id="UP000001726">
    <property type="component" value="Chromosome"/>
</dbReference>
<dbReference type="GO" id="GO:0005829">
    <property type="term" value="C:cytosol"/>
    <property type="evidence" value="ECO:0007669"/>
    <property type="project" value="TreeGrafter"/>
</dbReference>
<dbReference type="GO" id="GO:0008199">
    <property type="term" value="F:ferric iron binding"/>
    <property type="evidence" value="ECO:0007669"/>
    <property type="project" value="TreeGrafter"/>
</dbReference>
<dbReference type="GO" id="GO:0051604">
    <property type="term" value="P:protein maturation"/>
    <property type="evidence" value="ECO:0007669"/>
    <property type="project" value="TreeGrafter"/>
</dbReference>
<dbReference type="CDD" id="cd16341">
    <property type="entry name" value="FdhE"/>
    <property type="match status" value="1"/>
</dbReference>
<dbReference type="FunFam" id="3.90.1670.10:FF:000001">
    <property type="entry name" value="Protein FdhE"/>
    <property type="match status" value="1"/>
</dbReference>
<dbReference type="Gene3D" id="3.90.1670.10">
    <property type="entry name" value="FdhE-like domain"/>
    <property type="match status" value="1"/>
</dbReference>
<dbReference type="HAMAP" id="MF_00611">
    <property type="entry name" value="FdeH"/>
    <property type="match status" value="1"/>
</dbReference>
<dbReference type="InterPro" id="IPR024064">
    <property type="entry name" value="FdhE-like_sf"/>
</dbReference>
<dbReference type="InterPro" id="IPR056796">
    <property type="entry name" value="FdhE_C"/>
</dbReference>
<dbReference type="InterPro" id="IPR056797">
    <property type="entry name" value="FdhE_central"/>
</dbReference>
<dbReference type="InterPro" id="IPR056774">
    <property type="entry name" value="FdhE_N"/>
</dbReference>
<dbReference type="InterPro" id="IPR006452">
    <property type="entry name" value="Formate_DH_accessory"/>
</dbReference>
<dbReference type="NCBIfam" id="TIGR01562">
    <property type="entry name" value="FdhE"/>
    <property type="match status" value="1"/>
</dbReference>
<dbReference type="NCBIfam" id="NF002925">
    <property type="entry name" value="PRK03564.1"/>
    <property type="match status" value="1"/>
</dbReference>
<dbReference type="PANTHER" id="PTHR37689">
    <property type="entry name" value="PROTEIN FDHE"/>
    <property type="match status" value="1"/>
</dbReference>
<dbReference type="PANTHER" id="PTHR37689:SF1">
    <property type="entry name" value="PROTEIN FDHE"/>
    <property type="match status" value="1"/>
</dbReference>
<dbReference type="Pfam" id="PF24860">
    <property type="entry name" value="FdhE_C"/>
    <property type="match status" value="1"/>
</dbReference>
<dbReference type="Pfam" id="PF24859">
    <property type="entry name" value="FdhE_central"/>
    <property type="match status" value="1"/>
</dbReference>
<dbReference type="Pfam" id="PF04216">
    <property type="entry name" value="FdhE_N"/>
    <property type="match status" value="1"/>
</dbReference>
<dbReference type="PIRSF" id="PIRSF018296">
    <property type="entry name" value="Format_dh_formtn"/>
    <property type="match status" value="1"/>
</dbReference>
<dbReference type="SUPFAM" id="SSF144020">
    <property type="entry name" value="FdhE-like"/>
    <property type="match status" value="1"/>
</dbReference>
<gene>
    <name evidence="1" type="primary">fdhE</name>
    <name type="ordered locus">ETA_34330</name>
</gene>